<dbReference type="EC" id="1.2.1.72" evidence="1"/>
<dbReference type="EMBL" id="AM933172">
    <property type="protein sequence ID" value="CAR34491.1"/>
    <property type="molecule type" value="Genomic_DNA"/>
</dbReference>
<dbReference type="RefSeq" id="WP_000218333.1">
    <property type="nucleotide sequence ID" value="NC_011294.1"/>
</dbReference>
<dbReference type="SMR" id="B5QXJ7"/>
<dbReference type="KEGG" id="set:SEN2913"/>
<dbReference type="HOGENOM" id="CLU_030140_0_0_6"/>
<dbReference type="UniPathway" id="UPA00244">
    <property type="reaction ID" value="UER00309"/>
</dbReference>
<dbReference type="Proteomes" id="UP000000613">
    <property type="component" value="Chromosome"/>
</dbReference>
<dbReference type="GO" id="GO:0005737">
    <property type="term" value="C:cytoplasm"/>
    <property type="evidence" value="ECO:0007669"/>
    <property type="project" value="UniProtKB-SubCell"/>
</dbReference>
<dbReference type="GO" id="GO:0048001">
    <property type="term" value="F:erythrose-4-phosphate dehydrogenase activity"/>
    <property type="evidence" value="ECO:0007669"/>
    <property type="project" value="UniProtKB-UniRule"/>
</dbReference>
<dbReference type="GO" id="GO:0051287">
    <property type="term" value="F:NAD binding"/>
    <property type="evidence" value="ECO:0007669"/>
    <property type="project" value="InterPro"/>
</dbReference>
<dbReference type="GO" id="GO:0050661">
    <property type="term" value="F:NADP binding"/>
    <property type="evidence" value="ECO:0007669"/>
    <property type="project" value="InterPro"/>
</dbReference>
<dbReference type="GO" id="GO:0006006">
    <property type="term" value="P:glucose metabolic process"/>
    <property type="evidence" value="ECO:0007669"/>
    <property type="project" value="InterPro"/>
</dbReference>
<dbReference type="GO" id="GO:0042823">
    <property type="term" value="P:pyridoxal phosphate biosynthetic process"/>
    <property type="evidence" value="ECO:0007669"/>
    <property type="project" value="UniProtKB-UniRule"/>
</dbReference>
<dbReference type="GO" id="GO:0008615">
    <property type="term" value="P:pyridoxine biosynthetic process"/>
    <property type="evidence" value="ECO:0007669"/>
    <property type="project" value="UniProtKB-UniRule"/>
</dbReference>
<dbReference type="CDD" id="cd23937">
    <property type="entry name" value="GAPDH_C_E4PDH"/>
    <property type="match status" value="1"/>
</dbReference>
<dbReference type="CDD" id="cd17892">
    <property type="entry name" value="GAPDH_N_E4PDH"/>
    <property type="match status" value="1"/>
</dbReference>
<dbReference type="FunFam" id="3.30.360.10:FF:000007">
    <property type="entry name" value="D-erythrose-4-phosphate dehydrogenase"/>
    <property type="match status" value="1"/>
</dbReference>
<dbReference type="FunFam" id="3.40.50.720:FF:000001">
    <property type="entry name" value="Glyceraldehyde-3-phosphate dehydrogenase"/>
    <property type="match status" value="1"/>
</dbReference>
<dbReference type="Gene3D" id="3.30.360.10">
    <property type="entry name" value="Dihydrodipicolinate Reductase, domain 2"/>
    <property type="match status" value="1"/>
</dbReference>
<dbReference type="Gene3D" id="3.40.50.720">
    <property type="entry name" value="NAD(P)-binding Rossmann-like Domain"/>
    <property type="match status" value="1"/>
</dbReference>
<dbReference type="HAMAP" id="MF_01640">
    <property type="entry name" value="E4P_dehydrog"/>
    <property type="match status" value="1"/>
</dbReference>
<dbReference type="InterPro" id="IPR006422">
    <property type="entry name" value="E4P_DH_bac"/>
</dbReference>
<dbReference type="InterPro" id="IPR020831">
    <property type="entry name" value="GlycerAld/Erythrose_P_DH"/>
</dbReference>
<dbReference type="InterPro" id="IPR020830">
    <property type="entry name" value="GlycerAld_3-P_DH_AS"/>
</dbReference>
<dbReference type="InterPro" id="IPR020829">
    <property type="entry name" value="GlycerAld_3-P_DH_cat"/>
</dbReference>
<dbReference type="InterPro" id="IPR020828">
    <property type="entry name" value="GlycerAld_3-P_DH_NAD(P)-bd"/>
</dbReference>
<dbReference type="InterPro" id="IPR006424">
    <property type="entry name" value="Glyceraldehyde-3-P_DH_1"/>
</dbReference>
<dbReference type="InterPro" id="IPR036291">
    <property type="entry name" value="NAD(P)-bd_dom_sf"/>
</dbReference>
<dbReference type="NCBIfam" id="TIGR01532">
    <property type="entry name" value="E4PD_g-proteo"/>
    <property type="match status" value="1"/>
</dbReference>
<dbReference type="NCBIfam" id="TIGR01534">
    <property type="entry name" value="GAPDH-I"/>
    <property type="match status" value="1"/>
</dbReference>
<dbReference type="NCBIfam" id="NF010058">
    <property type="entry name" value="PRK13535.1"/>
    <property type="match status" value="1"/>
</dbReference>
<dbReference type="PANTHER" id="PTHR43148">
    <property type="entry name" value="GLYCERALDEHYDE-3-PHOSPHATE DEHYDROGENASE 2"/>
    <property type="match status" value="1"/>
</dbReference>
<dbReference type="Pfam" id="PF02800">
    <property type="entry name" value="Gp_dh_C"/>
    <property type="match status" value="1"/>
</dbReference>
<dbReference type="Pfam" id="PF00044">
    <property type="entry name" value="Gp_dh_N"/>
    <property type="match status" value="1"/>
</dbReference>
<dbReference type="PIRSF" id="PIRSF000149">
    <property type="entry name" value="GAP_DH"/>
    <property type="match status" value="1"/>
</dbReference>
<dbReference type="PRINTS" id="PR00078">
    <property type="entry name" value="G3PDHDRGNASE"/>
</dbReference>
<dbReference type="SMART" id="SM00846">
    <property type="entry name" value="Gp_dh_N"/>
    <property type="match status" value="1"/>
</dbReference>
<dbReference type="SUPFAM" id="SSF55347">
    <property type="entry name" value="Glyceraldehyde-3-phosphate dehydrogenase-like, C-terminal domain"/>
    <property type="match status" value="1"/>
</dbReference>
<dbReference type="SUPFAM" id="SSF51735">
    <property type="entry name" value="NAD(P)-binding Rossmann-fold domains"/>
    <property type="match status" value="1"/>
</dbReference>
<dbReference type="PROSITE" id="PS00071">
    <property type="entry name" value="GAPDH"/>
    <property type="match status" value="1"/>
</dbReference>
<evidence type="ECO:0000255" key="1">
    <source>
        <dbReference type="HAMAP-Rule" id="MF_01640"/>
    </source>
</evidence>
<protein>
    <recommendedName>
        <fullName evidence="1">D-erythrose-4-phosphate dehydrogenase</fullName>
        <shortName evidence="1">E4PDH</shortName>
        <ecNumber evidence="1">1.2.1.72</ecNumber>
    </recommendedName>
</protein>
<sequence length="348" mass="38126">MTVRIAINGFGRIGRNVVRALYESGRRAEITVVAINELADAAGMAHLLKYDTSHGRFAWEVRHEREQLFVGDDVIRILHERTLADLPWRELGVDVVLDCTGVYGNREHGEAHIAAGAKKVLFSHPGSNDLDATVVFGVNQNELRAEHRIVSNASCTTNCIIPVIKLLDDAYGIESGTVTTIHSAMNDQQVIDAYHSDLRRTRAASQSIIPVDTKLAAGITRIFPQFNDRFEAIAVRVPTINVTAIDLSVTVKKPVKASEVNQLLQKAAQGAFHGIVDYTESPLVSIDFNHDPHSAIVDGTQTRVSGAHLIKTLVWCDNEWGFANRMLDTTLAMAAVGFRLDASASTKL</sequence>
<keyword id="KW-0963">Cytoplasm</keyword>
<keyword id="KW-0520">NAD</keyword>
<keyword id="KW-0560">Oxidoreductase</keyword>
<keyword id="KW-0664">Pyridoxine biosynthesis</keyword>
<organism>
    <name type="scientific">Salmonella enteritidis PT4 (strain P125109)</name>
    <dbReference type="NCBI Taxonomy" id="550537"/>
    <lineage>
        <taxon>Bacteria</taxon>
        <taxon>Pseudomonadati</taxon>
        <taxon>Pseudomonadota</taxon>
        <taxon>Gammaproteobacteria</taxon>
        <taxon>Enterobacterales</taxon>
        <taxon>Enterobacteriaceae</taxon>
        <taxon>Salmonella</taxon>
    </lineage>
</organism>
<name>E4PD_SALEP</name>
<reference key="1">
    <citation type="journal article" date="2008" name="Genome Res.">
        <title>Comparative genome analysis of Salmonella enteritidis PT4 and Salmonella gallinarum 287/91 provides insights into evolutionary and host adaptation pathways.</title>
        <authorList>
            <person name="Thomson N.R."/>
            <person name="Clayton D.J."/>
            <person name="Windhorst D."/>
            <person name="Vernikos G."/>
            <person name="Davidson S."/>
            <person name="Churcher C."/>
            <person name="Quail M.A."/>
            <person name="Stevens M."/>
            <person name="Jones M.A."/>
            <person name="Watson M."/>
            <person name="Barron A."/>
            <person name="Layton A."/>
            <person name="Pickard D."/>
            <person name="Kingsley R.A."/>
            <person name="Bignell A."/>
            <person name="Clark L."/>
            <person name="Harris B."/>
            <person name="Ormond D."/>
            <person name="Abdellah Z."/>
            <person name="Brooks K."/>
            <person name="Cherevach I."/>
            <person name="Chillingworth T."/>
            <person name="Woodward J."/>
            <person name="Norberczak H."/>
            <person name="Lord A."/>
            <person name="Arrowsmith C."/>
            <person name="Jagels K."/>
            <person name="Moule S."/>
            <person name="Mungall K."/>
            <person name="Saunders M."/>
            <person name="Whitehead S."/>
            <person name="Chabalgoity J.A."/>
            <person name="Maskell D."/>
            <person name="Humphreys T."/>
            <person name="Roberts M."/>
            <person name="Barrow P.A."/>
            <person name="Dougan G."/>
            <person name="Parkhill J."/>
        </authorList>
    </citation>
    <scope>NUCLEOTIDE SEQUENCE [LARGE SCALE GENOMIC DNA]</scope>
    <source>
        <strain>P125109</strain>
    </source>
</reference>
<gene>
    <name evidence="1" type="primary">epd</name>
    <name type="ordered locus">SEN2913</name>
</gene>
<proteinExistence type="inferred from homology"/>
<accession>B5QXJ7</accession>
<feature type="chain" id="PRO_1000186834" description="D-erythrose-4-phosphate dehydrogenase">
    <location>
        <begin position="1"/>
        <end position="348"/>
    </location>
</feature>
<feature type="active site" description="Nucleophile" evidence="1">
    <location>
        <position position="155"/>
    </location>
</feature>
<feature type="binding site" evidence="1">
    <location>
        <begin position="12"/>
        <end position="13"/>
    </location>
    <ligand>
        <name>NAD(+)</name>
        <dbReference type="ChEBI" id="CHEBI:57540"/>
    </ligand>
</feature>
<feature type="binding site" evidence="1">
    <location>
        <position position="81"/>
    </location>
    <ligand>
        <name>NAD(+)</name>
        <dbReference type="ChEBI" id="CHEBI:57540"/>
    </ligand>
</feature>
<feature type="binding site" evidence="1">
    <location>
        <begin position="154"/>
        <end position="156"/>
    </location>
    <ligand>
        <name>substrate</name>
    </ligand>
</feature>
<feature type="binding site" evidence="1">
    <location>
        <position position="200"/>
    </location>
    <ligand>
        <name>substrate</name>
    </ligand>
</feature>
<feature type="binding site" evidence="1">
    <location>
        <begin position="213"/>
        <end position="214"/>
    </location>
    <ligand>
        <name>substrate</name>
    </ligand>
</feature>
<feature type="binding site" evidence="1">
    <location>
        <position position="236"/>
    </location>
    <ligand>
        <name>substrate</name>
    </ligand>
</feature>
<feature type="binding site" evidence="1">
    <location>
        <position position="318"/>
    </location>
    <ligand>
        <name>NAD(+)</name>
        <dbReference type="ChEBI" id="CHEBI:57540"/>
    </ligand>
</feature>
<feature type="site" description="Activates thiol group during catalysis" evidence="1">
    <location>
        <position position="182"/>
    </location>
</feature>
<comment type="function">
    <text evidence="1">Catalyzes the NAD-dependent conversion of D-erythrose 4-phosphate to 4-phosphoerythronate.</text>
</comment>
<comment type="catalytic activity">
    <reaction evidence="1">
        <text>D-erythrose 4-phosphate + NAD(+) + H2O = 4-phospho-D-erythronate + NADH + 2 H(+)</text>
        <dbReference type="Rhea" id="RHEA:12056"/>
        <dbReference type="ChEBI" id="CHEBI:15377"/>
        <dbReference type="ChEBI" id="CHEBI:15378"/>
        <dbReference type="ChEBI" id="CHEBI:16897"/>
        <dbReference type="ChEBI" id="CHEBI:57540"/>
        <dbReference type="ChEBI" id="CHEBI:57945"/>
        <dbReference type="ChEBI" id="CHEBI:58766"/>
        <dbReference type="EC" id="1.2.1.72"/>
    </reaction>
</comment>
<comment type="pathway">
    <text evidence="1">Cofactor biosynthesis; pyridoxine 5'-phosphate biosynthesis; pyridoxine 5'-phosphate from D-erythrose 4-phosphate: step 1/5.</text>
</comment>
<comment type="subunit">
    <text evidence="1">Homotetramer.</text>
</comment>
<comment type="subcellular location">
    <subcellularLocation>
        <location evidence="1">Cytoplasm</location>
    </subcellularLocation>
</comment>
<comment type="similarity">
    <text evidence="1">Belongs to the glyceraldehyde-3-phosphate dehydrogenase family. Epd subfamily.</text>
</comment>